<name>VKTC_ANEVI</name>
<evidence type="ECO:0000250" key="1"/>
<evidence type="ECO:0000250" key="2">
    <source>
        <dbReference type="UniProtKB" id="P10280"/>
    </source>
</evidence>
<evidence type="ECO:0000250" key="3">
    <source>
        <dbReference type="UniProtKB" id="Q9TWF8"/>
    </source>
</evidence>
<evidence type="ECO:0000250" key="4">
    <source>
        <dbReference type="UniProtKB" id="Q9TWG0"/>
    </source>
</evidence>
<evidence type="ECO:0000255" key="5">
    <source>
        <dbReference type="PROSITE-ProRule" id="PRU00031"/>
    </source>
</evidence>
<evidence type="ECO:0000303" key="6">
    <source>
    </source>
</evidence>
<evidence type="ECO:0000303" key="7">
    <source>
    </source>
</evidence>
<evidence type="ECO:0000305" key="8"/>
<proteinExistence type="inferred from homology"/>
<keyword id="KW-1015">Disulfide bond</keyword>
<keyword id="KW-0872">Ion channel impairing toxin</keyword>
<keyword id="KW-0166">Nematocyst</keyword>
<keyword id="KW-0632">Potassium channel impairing toxin</keyword>
<keyword id="KW-0646">Protease inhibitor</keyword>
<keyword id="KW-0964">Secreted</keyword>
<keyword id="KW-0722">Serine protease inhibitor</keyword>
<keyword id="KW-0732">Signal</keyword>
<keyword id="KW-0800">Toxin</keyword>
<keyword id="KW-1220">Voltage-gated potassium channel impairing toxin</keyword>
<feature type="signal peptide" evidence="4">
    <location>
        <begin position="1"/>
        <end position="16"/>
    </location>
</feature>
<feature type="chain" id="PRO_0000433770" description="U-actitoxin-Avd3o">
    <location>
        <begin position="17"/>
        <end position="87"/>
    </location>
</feature>
<feature type="domain" description="BPTI/Kunitz inhibitor" evidence="5">
    <location>
        <begin position="21"/>
        <end position="71"/>
    </location>
</feature>
<feature type="site" description="Reactive bond" evidence="1">
    <location>
        <begin position="31"/>
        <end position="32"/>
    </location>
</feature>
<feature type="disulfide bond" evidence="5">
    <location>
        <begin position="21"/>
        <end position="71"/>
    </location>
</feature>
<feature type="disulfide bond" evidence="5">
    <location>
        <begin position="30"/>
        <end position="54"/>
    </location>
</feature>
<feature type="disulfide bond" evidence="5">
    <location>
        <begin position="46"/>
        <end position="67"/>
    </location>
</feature>
<accession>P0DN16</accession>
<protein>
    <recommendedName>
        <fullName evidence="7">U-actitoxin-Avd3o</fullName>
        <shortName evidence="7">U-AITX-Avd3o</shortName>
    </recommendedName>
    <alternativeName>
        <fullName evidence="6">AsKC12</fullName>
    </alternativeName>
</protein>
<dbReference type="EMBL" id="FK749190">
    <property type="status" value="NOT_ANNOTATED_CDS"/>
    <property type="molecule type" value="mRNA"/>
</dbReference>
<dbReference type="SMR" id="P0DN16"/>
<dbReference type="GO" id="GO:0005615">
    <property type="term" value="C:extracellular space"/>
    <property type="evidence" value="ECO:0007669"/>
    <property type="project" value="TreeGrafter"/>
</dbReference>
<dbReference type="GO" id="GO:0042151">
    <property type="term" value="C:nematocyst"/>
    <property type="evidence" value="ECO:0007669"/>
    <property type="project" value="UniProtKB-SubCell"/>
</dbReference>
<dbReference type="GO" id="GO:0015459">
    <property type="term" value="F:potassium channel regulator activity"/>
    <property type="evidence" value="ECO:0007669"/>
    <property type="project" value="UniProtKB-KW"/>
</dbReference>
<dbReference type="GO" id="GO:0004867">
    <property type="term" value="F:serine-type endopeptidase inhibitor activity"/>
    <property type="evidence" value="ECO:0007669"/>
    <property type="project" value="UniProtKB-KW"/>
</dbReference>
<dbReference type="GO" id="GO:0090729">
    <property type="term" value="F:toxin activity"/>
    <property type="evidence" value="ECO:0007669"/>
    <property type="project" value="UniProtKB-KW"/>
</dbReference>
<dbReference type="Gene3D" id="4.10.410.10">
    <property type="entry name" value="Pancreatic trypsin inhibitor Kunitz domain"/>
    <property type="match status" value="1"/>
</dbReference>
<dbReference type="InterPro" id="IPR002223">
    <property type="entry name" value="Kunitz_BPTI"/>
</dbReference>
<dbReference type="InterPro" id="IPR036880">
    <property type="entry name" value="Kunitz_BPTI_sf"/>
</dbReference>
<dbReference type="InterPro" id="IPR020901">
    <property type="entry name" value="Prtase_inh_Kunz-CS"/>
</dbReference>
<dbReference type="InterPro" id="IPR050098">
    <property type="entry name" value="TFPI/VKTCI-like"/>
</dbReference>
<dbReference type="PANTHER" id="PTHR10083">
    <property type="entry name" value="KUNITZ-TYPE PROTEASE INHIBITOR-RELATED"/>
    <property type="match status" value="1"/>
</dbReference>
<dbReference type="PANTHER" id="PTHR10083:SF376">
    <property type="entry name" value="SERINE PEPTIDASE INHIBITOR, KUNITZ TYPE, 3"/>
    <property type="match status" value="1"/>
</dbReference>
<dbReference type="Pfam" id="PF00014">
    <property type="entry name" value="Kunitz_BPTI"/>
    <property type="match status" value="1"/>
</dbReference>
<dbReference type="PRINTS" id="PR00759">
    <property type="entry name" value="BASICPTASE"/>
</dbReference>
<dbReference type="SMART" id="SM00131">
    <property type="entry name" value="KU"/>
    <property type="match status" value="1"/>
</dbReference>
<dbReference type="SUPFAM" id="SSF57362">
    <property type="entry name" value="BPTI-like"/>
    <property type="match status" value="1"/>
</dbReference>
<dbReference type="PROSITE" id="PS00280">
    <property type="entry name" value="BPTI_KUNITZ_1"/>
    <property type="match status" value="1"/>
</dbReference>
<dbReference type="PROSITE" id="PS50279">
    <property type="entry name" value="BPTI_KUNITZ_2"/>
    <property type="match status" value="1"/>
</dbReference>
<comment type="function">
    <text evidence="2 3">Serine protease inhibitor that inhibits both tissue and plasma kallikreins. Has hemolytic activity. Inhibits voltage-gated potassium channels (Kv).</text>
</comment>
<comment type="subcellular location">
    <subcellularLocation>
        <location evidence="8">Secreted</location>
    </subcellularLocation>
    <subcellularLocation>
        <location evidence="8">Nematocyst</location>
    </subcellularLocation>
</comment>
<comment type="similarity">
    <text evidence="8">Belongs to the venom Kunitz-type family. Sea anemone type 2 potassium channel toxin subfamily.</text>
</comment>
<comment type="caution">
    <text evidence="8">Opinions are divided on whether Anemonia viridis (Forsskal, 1775) and Anemonia sulcata (Pennant, 1777) are separate species.</text>
</comment>
<reference key="1">
    <citation type="journal article" date="2009" name="BMC Genomics">
        <title>Comprehensive EST analysis of the symbiotic sea anemone, Anemonia viridis.</title>
        <authorList>
            <person name="Sabourault C."/>
            <person name="Ganot P."/>
            <person name="Deleury E."/>
            <person name="Allemand D."/>
            <person name="Furla P."/>
        </authorList>
    </citation>
    <scope>NUCLEOTIDE SEQUENCE [MRNA]</scope>
</reference>
<reference key="2">
    <citation type="journal article" date="2011" name="BMC Genomics">
        <title>The mining of toxin-like polypeptides from EST database by single residue distribution analysis.</title>
        <authorList>
            <person name="Kozlov S."/>
            <person name="Grishin E."/>
        </authorList>
    </citation>
    <scope>NOMENCLATURE</scope>
</reference>
<reference key="3">
    <citation type="journal article" date="2012" name="Toxicon">
        <title>Development of a rational nomenclature for naming peptide and protein toxins from sea anemones.</title>
        <authorList>
            <person name="Oliveira J.S."/>
            <person name="Fuentes-Silva D."/>
            <person name="King G.F."/>
        </authorList>
    </citation>
    <scope>NOMENCLATURE</scope>
</reference>
<organism>
    <name type="scientific">Anemonia viridis</name>
    <name type="common">Snakelocks anemone</name>
    <dbReference type="NCBI Taxonomy" id="51769"/>
    <lineage>
        <taxon>Eukaryota</taxon>
        <taxon>Metazoa</taxon>
        <taxon>Cnidaria</taxon>
        <taxon>Anthozoa</taxon>
        <taxon>Hexacorallia</taxon>
        <taxon>Actiniaria</taxon>
        <taxon>Actiniidae</taxon>
        <taxon>Anemonia</taxon>
    </lineage>
</organism>
<sequence>MVYLLCFFLVADVSYGINKDCLLPKVVGFCRARFPRYYYNSSSRRCEKFNYGGCGGNANNFSSYYECHIKCFGPRAIIFPEDSPKEN</sequence>